<comment type="function">
    <text evidence="6 7 8">Pore-forming subunit of a heterotetrameric, non-selective cation channel that is permeable to Ca(2+) (PubMed:19464260, PubMed:23212381). Also shows permeability towards NA(1+), K(+) and Mg(2+) (PubMed:23212381). Heterotetrameric complex channel is activated by external low pH and Ca(2+), but opens only when the extracellular pH rises again and after the removal of acid stimulus (PubMed:19464260, PubMed:23212381). May act as a sour taste receptor in gustatory cells; however, its contribution to sour taste perception is unclear in vivo and may be indirect (PubMed:19812697).</text>
</comment>
<comment type="catalytic activity">
    <reaction evidence="6">
        <text>Ca(2+)(in) = Ca(2+)(out)</text>
        <dbReference type="Rhea" id="RHEA:29671"/>
        <dbReference type="ChEBI" id="CHEBI:29108"/>
    </reaction>
</comment>
<comment type="catalytic activity">
    <reaction evidence="8">
        <text>Na(+)(in) = Na(+)(out)</text>
        <dbReference type="Rhea" id="RHEA:34963"/>
        <dbReference type="ChEBI" id="CHEBI:29101"/>
    </reaction>
</comment>
<comment type="catalytic activity">
    <reaction evidence="8">
        <text>K(+)(in) = K(+)(out)</text>
        <dbReference type="Rhea" id="RHEA:29463"/>
        <dbReference type="ChEBI" id="CHEBI:29103"/>
    </reaction>
</comment>
<comment type="catalytic activity">
    <reaction evidence="8">
        <text>Mg(2+)(in) = Mg(2+)(out)</text>
        <dbReference type="Rhea" id="RHEA:29827"/>
        <dbReference type="ChEBI" id="CHEBI:18420"/>
    </reaction>
</comment>
<comment type="activity regulation">
    <text evidence="6 9">The non-selective cation channel is gated following an off-response property by acid: gated open after the removal of acid stimulus, but not during acid application (PubMed:19464260). Regulation of non-selective cation channel activity by external Ca(2+) is bimodal, first sensitizing and subsequently inactivating the current (PubMed:26066678).</text>
</comment>
<comment type="subunit">
    <text evidence="8">Heterotetramer with PKD2L1, composed of 3 subunit of PKD2L1 and 1 subunit of PKD1L3.</text>
</comment>
<comment type="subcellular location">
    <subcellularLocation>
        <location evidence="8">Cell membrane</location>
        <topology evidence="2">Multi-pass membrane protein</topology>
    </subcellularLocation>
    <text evidence="8">Interaction with PKD2L1 is required for localization to the cell membrane.</text>
</comment>
<comment type="tissue specificity">
    <text evidence="5">Highly expressed in placenta, weakly in heart and lung.</text>
</comment>
<comment type="PTM">
    <text evidence="3">Autoproteolytically processed at the GPS region of the GAIN-B domain; this cleavage modulates receptor activity.</text>
</comment>
<comment type="similarity">
    <text evidence="10">Belongs to the polycystin family.</text>
</comment>
<comment type="caution">
    <text evidence="1 11">PKD1L3 and PKD2L1 has been initially identified as sour taste receptor in type III gustatory cells, but its role in sour taste reception is controversial (By similarity). Some data confirm this hypothesis in human: in 2 patients with sour ageusia that are unresponsive to sour stimuli, but show normal responses to bitter, sweet, and salty stimuli, expression of PKD1L3 and PKD2L1 is absent in the anterior part of the tongue. However, a number of experiments have recently shown that the sour taste receptor activity is probably indirect: mice lacking Pkd1l3 do not show defects in sour taste perception (By similarity). Moreover, the Pkd1l3-Pkd2l1 heteromer, when expressed in cells does not respond to acid stimuli used to evoke proton currents in taste cells (By similarity).</text>
</comment>
<feature type="signal peptide" evidence="2">
    <location>
        <begin position="1"/>
        <end position="23"/>
    </location>
</feature>
<feature type="chain" id="PRO_0000322578" description="Polycystin-1-like protein 3">
    <location>
        <begin position="24"/>
        <end position="1732"/>
    </location>
</feature>
<feature type="topological domain" description="Extracellular" evidence="10">
    <location>
        <begin position="24"/>
        <end position="697"/>
    </location>
</feature>
<feature type="transmembrane region" description="Helical" evidence="2">
    <location>
        <begin position="698"/>
        <end position="718"/>
    </location>
</feature>
<feature type="topological domain" description="Cytoplasmic" evidence="10">
    <location>
        <begin position="719"/>
        <end position="905"/>
    </location>
</feature>
<feature type="transmembrane region" description="Helical" evidence="2">
    <location>
        <begin position="906"/>
        <end position="926"/>
    </location>
</feature>
<feature type="topological domain" description="Extracellular" evidence="10">
    <location>
        <begin position="927"/>
        <end position="939"/>
    </location>
</feature>
<feature type="transmembrane region" description="Helical" evidence="2">
    <location>
        <begin position="940"/>
        <end position="960"/>
    </location>
</feature>
<feature type="topological domain" description="Cytoplasmic" evidence="10">
    <location>
        <begin position="961"/>
        <end position="1154"/>
    </location>
</feature>
<feature type="transmembrane region" description="Helical" evidence="2">
    <location>
        <begin position="1155"/>
        <end position="1175"/>
    </location>
</feature>
<feature type="topological domain" description="Extracellular" evidence="10">
    <location>
        <begin position="1176"/>
        <end position="1198"/>
    </location>
</feature>
<feature type="transmembrane region" description="Helical" evidence="2">
    <location>
        <begin position="1199"/>
        <end position="1219"/>
    </location>
</feature>
<feature type="topological domain" description="Cytoplasmic" evidence="10">
    <location>
        <begin position="1220"/>
        <end position="1289"/>
    </location>
</feature>
<feature type="transmembrane region" description="Helical" evidence="1">
    <location>
        <begin position="1290"/>
        <end position="1300"/>
    </location>
</feature>
<feature type="topological domain" description="Extracellular" evidence="1">
    <location>
        <begin position="1301"/>
        <end position="1461"/>
    </location>
</feature>
<feature type="transmembrane region" description="Helical" evidence="1">
    <location>
        <begin position="1462"/>
        <end position="1491"/>
    </location>
</feature>
<feature type="topological domain" description="Cytoplasmic" evidence="1">
    <location>
        <begin position="1492"/>
        <end position="1500"/>
    </location>
</feature>
<feature type="transmembrane region" description="Helical" evidence="1">
    <location>
        <begin position="1501"/>
        <end position="1519"/>
    </location>
</feature>
<feature type="topological domain" description="Extracellular" evidence="1">
    <location>
        <begin position="1520"/>
        <end position="1550"/>
    </location>
</feature>
<feature type="transmembrane region" description="Helical" evidence="1">
    <location>
        <begin position="1551"/>
        <end position="1572"/>
    </location>
</feature>
<feature type="topological domain" description="Cytoplasmic" evidence="1">
    <location>
        <begin position="1573"/>
        <end position="1589"/>
    </location>
</feature>
<feature type="transmembrane region" description="Helical" evidence="1">
    <location>
        <begin position="1590"/>
        <end position="1614"/>
    </location>
</feature>
<feature type="topological domain" description="Extracellular" evidence="1">
    <location>
        <begin position="1615"/>
        <end position="1647"/>
    </location>
</feature>
<feature type="transmembrane region" description="Helical" evidence="1">
    <location>
        <begin position="1648"/>
        <end position="1667"/>
    </location>
</feature>
<feature type="topological domain" description="Cytoplasmic" evidence="1">
    <location>
        <begin position="1668"/>
        <end position="1732"/>
    </location>
</feature>
<feature type="domain" description="C-type lectin">
    <location>
        <begin position="30"/>
        <end position="138"/>
    </location>
</feature>
<feature type="domain" description="GAIN-B" evidence="3">
    <location>
        <begin position="523"/>
        <end position="685"/>
    </location>
</feature>
<feature type="domain" description="PLAT" evidence="4">
    <location>
        <begin position="743"/>
        <end position="860"/>
    </location>
</feature>
<feature type="region of interest" description="GPS" evidence="3">
    <location>
        <begin position="635"/>
        <end position="685"/>
    </location>
</feature>
<feature type="region of interest" description="Channel pore-region">
    <location>
        <begin position="1613"/>
        <end position="1651"/>
    </location>
</feature>
<feature type="site" description="Cleavage; by autolysis" evidence="3">
    <location>
        <begin position="668"/>
        <end position="669"/>
    </location>
</feature>
<feature type="glycosylation site" description="N-linked (GlcNAc...) asparagine" evidence="2">
    <location>
        <position position="286"/>
    </location>
</feature>
<feature type="glycosylation site" description="N-linked (GlcNAc...) asparagine" evidence="2">
    <location>
        <position position="363"/>
    </location>
</feature>
<feature type="glycosylation site" description="N-linked (GlcNAc...) asparagine" evidence="2">
    <location>
        <position position="515"/>
    </location>
</feature>
<feature type="glycosylation site" description="N-linked (GlcNAc...) asparagine" evidence="2">
    <location>
        <position position="537"/>
    </location>
</feature>
<feature type="glycosylation site" description="N-linked (GlcNAc...) asparagine" evidence="2">
    <location>
        <position position="575"/>
    </location>
</feature>
<feature type="disulfide bond" evidence="4">
    <location>
        <begin position="51"/>
        <end position="137"/>
    </location>
</feature>
<feature type="disulfide bond" evidence="4">
    <location>
        <begin position="112"/>
        <end position="129"/>
    </location>
</feature>
<feature type="disulfide bond" evidence="3">
    <location>
        <begin position="635"/>
        <end position="663"/>
    </location>
</feature>
<feature type="disulfide bond" evidence="3">
    <location>
        <begin position="650"/>
        <end position="665"/>
    </location>
</feature>
<feature type="sequence variant" id="VAR_039453" description="In dbSNP:rs16973585.">
    <original>I</original>
    <variation>F</variation>
    <location>
        <position position="120"/>
    </location>
</feature>
<feature type="sequence variant" id="VAR_039454" description="In dbSNP:rs4788591.">
    <original>S</original>
    <variation>P</variation>
    <location>
        <position position="211"/>
    </location>
</feature>
<feature type="sequence variant" id="VAR_039455" description="In dbSNP:rs12708923.">
    <original>K</original>
    <variation>E</variation>
    <location>
        <position position="274"/>
    </location>
</feature>
<feature type="sequence variant" id="VAR_039456" description="In dbSNP:rs7185272.">
    <original>T</original>
    <variation>S</variation>
    <location>
        <position position="429"/>
    </location>
</feature>
<feature type="sequence variant" id="VAR_039457" description="In dbSNP:rs16973537.">
    <original>A</original>
    <variation>D</variation>
    <location>
        <position position="471"/>
    </location>
</feature>
<feature type="sequence variant" id="VAR_039458" description="In dbSNP:rs1559401.">
    <original>H</original>
    <variation>Q</variation>
    <location>
        <position position="571"/>
    </location>
</feature>
<feature type="sequence variant" id="VAR_039459" description="In dbSNP:rs9925415.">
    <original>V</original>
    <variation>M</variation>
    <location>
        <position position="593"/>
    </location>
</feature>
<feature type="sequence variant" id="VAR_039460" description="In dbSNP:rs9921412.">
    <original>V</original>
    <variation>I</variation>
    <location>
        <position position="903"/>
    </location>
</feature>
<feature type="sequence variant" id="VAR_039461" description="In dbSNP:rs1035543.">
    <original>S</original>
    <variation>R</variation>
    <location>
        <position position="1176"/>
    </location>
</feature>
<feature type="sequence variant" id="VAR_039462" description="In dbSNP:rs2038214289.">
    <original>Y</original>
    <variation>C</variation>
    <location>
        <position position="1474"/>
    </location>
</feature>
<accession>Q7Z443</accession>
<gene>
    <name evidence="12" type="primary">PKD1L3</name>
</gene>
<name>PK1L3_HUMAN</name>
<evidence type="ECO:0000250" key="1">
    <source>
        <dbReference type="UniProtKB" id="Q2EG98"/>
    </source>
</evidence>
<evidence type="ECO:0000255" key="2"/>
<evidence type="ECO:0000255" key="3">
    <source>
        <dbReference type="PROSITE-ProRule" id="PRU00098"/>
    </source>
</evidence>
<evidence type="ECO:0000255" key="4">
    <source>
        <dbReference type="PROSITE-ProRule" id="PRU00152"/>
    </source>
</evidence>
<evidence type="ECO:0000269" key="5">
    <source>
    </source>
</evidence>
<evidence type="ECO:0000269" key="6">
    <source>
    </source>
</evidence>
<evidence type="ECO:0000269" key="7">
    <source>
    </source>
</evidence>
<evidence type="ECO:0000269" key="8">
    <source>
    </source>
</evidence>
<evidence type="ECO:0000269" key="9">
    <source>
    </source>
</evidence>
<evidence type="ECO:0000305" key="10"/>
<evidence type="ECO:0000305" key="11">
    <source>
    </source>
</evidence>
<evidence type="ECO:0000312" key="12">
    <source>
        <dbReference type="HGNC" id="HGNC:21716"/>
    </source>
</evidence>
<reference key="1">
    <citation type="journal article" date="2003" name="Genomics">
        <title>Identification of two novel polycystic kidney disease-1-like genes in human and mouse genomes.</title>
        <authorList>
            <person name="Li A."/>
            <person name="Tian X."/>
            <person name="Sung S.-W."/>
            <person name="Somlo S."/>
        </authorList>
    </citation>
    <scope>NUCLEOTIDE SEQUENCE [MRNA]</scope>
    <scope>ALTERNATIVE SPLICING</scope>
    <scope>TISSUE SPECIFICITY</scope>
    <source>
        <tissue>Testis</tissue>
    </source>
</reference>
<reference key="2">
    <citation type="journal article" date="2003" name="Genomics">
        <authorList>
            <person name="Li A."/>
            <person name="Tian X."/>
            <person name="Sung S.-W."/>
            <person name="Somlo S."/>
        </authorList>
    </citation>
    <scope>ERRATUM OF PUBMED:12782129</scope>
</reference>
<reference key="3">
    <citation type="journal article" date="2009" name="Biochem. Biophys. Res. Commun.">
        <title>Acetic acid activates PKD1L3-PKD2L1 channel--a candidate sour taste receptor.</title>
        <authorList>
            <person name="Ishii S."/>
            <person name="Misaka T."/>
            <person name="Kishi M."/>
            <person name="Kaga T."/>
            <person name="Ishimaru Y."/>
            <person name="Abe K."/>
        </authorList>
    </citation>
    <scope>FUNCTION</scope>
    <scope>TRANSPORTER ACTIVITY</scope>
</reference>
<reference key="4">
    <citation type="journal article" date="2009" name="PLoS ONE">
        <title>Sour ageusia in two individuals implicates ion channels of the ASIC and PKD families in human sour taste perception at the anterior tongue.</title>
        <authorList>
            <person name="Huque T."/>
            <person name="Cowart B.J."/>
            <person name="Dankulich-Nagrudny L."/>
            <person name="Pribitkin E.A."/>
            <person name="Bayley D.L."/>
            <person name="Spielman A.I."/>
            <person name="Feldman R.S."/>
            <person name="Mackler S.A."/>
            <person name="Brand J.G."/>
        </authorList>
    </citation>
    <scope>FUNCTION</scope>
</reference>
<reference key="5">
    <citation type="journal article" date="2012" name="Nat. Commun.">
        <title>Molecular mechanism of the assembly of an acid-sensing receptor ion channel complex.</title>
        <authorList>
            <person name="Yu Y."/>
            <person name="Ulbrich M.H."/>
            <person name="Li M.H."/>
            <person name="Dobbins S."/>
            <person name="Zhang W.K."/>
            <person name="Tong L."/>
            <person name="Isacoff E.Y."/>
            <person name="Yang J."/>
        </authorList>
    </citation>
    <scope>FUNCTION</scope>
    <scope>TRANSPORTER ACTIVITY</scope>
    <scope>SUBCELLULAR LOCATION</scope>
    <scope>SUBUNIT</scope>
</reference>
<reference key="6">
    <citation type="journal article" date="2015" name="Eur. Biophys. J.">
        <title>PKD2L1/PKD1L3 channel complex with an alkali-activated mechanism and calcium-dependent inactivation.</title>
        <authorList>
            <person name="Chen P."/>
            <person name="Wu J.Z."/>
            <person name="Zhao J."/>
            <person name="Wang P."/>
            <person name="Luo J."/>
            <person name="Yang W."/>
            <person name="Liu X.D."/>
        </authorList>
    </citation>
    <scope>ACTIVITY REGULATION</scope>
</reference>
<proteinExistence type="evidence at protein level"/>
<keyword id="KW-0106">Calcium</keyword>
<keyword id="KW-0107">Calcium channel</keyword>
<keyword id="KW-0109">Calcium transport</keyword>
<keyword id="KW-1003">Cell membrane</keyword>
<keyword id="KW-1015">Disulfide bond</keyword>
<keyword id="KW-0325">Glycoprotein</keyword>
<keyword id="KW-0407">Ion channel</keyword>
<keyword id="KW-0406">Ion transport</keyword>
<keyword id="KW-0430">Lectin</keyword>
<keyword id="KW-0472">Membrane</keyword>
<keyword id="KW-1185">Reference proteome</keyword>
<keyword id="KW-0732">Signal</keyword>
<keyword id="KW-0812">Transmembrane</keyword>
<keyword id="KW-1133">Transmembrane helix</keyword>
<keyword id="KW-0813">Transport</keyword>
<sequence>MFFKGGSWLWLYIRTSIILGSELNSPAPHGQNNCYQLNRFQCSFEEAQHYCHVQRGFLAHIWNKEVQDLIRDYLEEGKKWWIGQNVMPLKKHQDNKYPADVAANGPPKPLSCTYLSRNFIRISSKGDKCLLKYYFICQTGDFLDGDAHYERNGNNSHLYQRHKKTKRGVAIARDKMPPGPGHLPTTCHYPLPAHLSKTLCHPISQFPSVLSSITSQVTSAASEPSSQPLPVITQLTMPVSVTHAGQSLAETTSSPKEEGHPNTFTSYLQVSLQKASGQVIDEIAGNFSRAVHGLQALNKLQEACEFLQKLTALTPRFSKPAQVNLINSLIYLSEELLRIPFQNNNSLGFKVPPTVCPFHSLNNVTKAGEGSWLESKRHTEPVEDILEMSLVEFGNIGEAFLEQNQSPESSVTLTSANATLLLSRQNISTLPLSSYTLGHPAPVRLGFPSALALKELLNKHPGVNVQITGLAFNPFKDLDNRNIVGSIGSVLLSANRKLLQVHDLMEDIEIMLWRNVSLETHPTSLNMSTHQLTITVNVTSLEKSLIVSIDPDSPLLMTLYLGFQYQPNCTHFHLNITLPKDKVWQKDEEYTWVLNPEHLQHGIGTYYITAVLSERQEGAQQTPSLVSVITAVTQCYYWEIHNQTWSSAGCQVGPQSTILRTQCLCNHLTFFASDFFVVPRTVNVEDTIKLFLRVTNNPVGVSLLASLLGFYVITVVWARKKDQADMQKVKVTVLADNDPSAQFHYLIQVYTGYRRSAATTAKVVITLYGSEGRSEPHHLCDPQKTVFERGGLDVFLLTTWTSLGNLHSLRLWHDNSGVSPSWYVSQVIVCDMAVKRKWHFLCNCWLAVDLGDCELDRVFIPVSKRELFSFRHLFSSMIVEKFTQDYLWLSIATRHPWNQFTRVQRLSCCMTLLLCNMVINVMFWKINSTTAKRDEQMRPFAVAWSELLVSIHTAVILFPINLVIGRLFPLIEPQETLPLFPPIQASCLSDASVEPLSATMVVEELKETVRFLLRRNTYLLSKCEQPPWSSWDITKLVKLLSSLVSSHLEGQGCHQQGERHWARVVPENHHHFCCYLHRVLQRLKSHLGTLGLTQGHQSCDFLDAASQLQKLQELLETHILPTEQEPSREVTSFAILSSEEGKKPISNGLSKWLTSVCWLLLGFTSLASAFFTALYSLELSKDQATSWMISIILSVLQNIFISQPVKVVFFTFLYSLMMSRMPRLNKENEQQTKRILALLAKCSSSVPGSRDKNNPVYVAPAINSPTKHPERTLKKKKLFKLTGDILVQILFLTLLMTAIYSAKNSNRFYLHQAIWKTFSHQFSEIKLLQDFYPWANHILLPSLYGDYRGKNAVLEPSHCKCGVQLIFQIPRTKTYEKVDEGQLAFCDNGHTCGRPKSLFPGLHLRRFSYICSPRPMVLIPTDELHERLTSKNENGFSYIMRGAFFTSLRLESFTSLQMSKKGCVWSIISQVIYYLLVCYYAFIQGCQLKQQKWRFFTGKRNILDTSIILISFILLGLDMKSISLHKKNMARYRDDQDRFISFYEAVKVNSAATHLVGFPVLLATVQLWNLLRHSPRLRVISRTLSRAWDEVVGFLLIILILLTGYAIAFNLLFGCSISDYRTFFSSAVTVVGLLMGISHQEEVFALDPVLGTFLILTSVILMVLVVINLFVSAILMAFGKERKSLKKEAALIDTLLQKLSNLLGISWPQKTSSEQAATTAVGSDTEVLDELP</sequence>
<protein>
    <recommendedName>
        <fullName>Polycystin-1-like protein 3</fullName>
        <shortName evidence="10">Polycystin-1L3</shortName>
    </recommendedName>
    <alternativeName>
        <fullName>PC1-like 3 protein</fullName>
    </alternativeName>
    <alternativeName>
        <fullName>Polycystic kidney disease protein 1-like 3</fullName>
    </alternativeName>
</protein>
<dbReference type="EMBL" id="AY164485">
    <property type="protein sequence ID" value="AAO32798.1"/>
    <property type="molecule type" value="mRNA"/>
</dbReference>
<dbReference type="CCDS" id="CCDS73912.1"/>
<dbReference type="RefSeq" id="NP_853514.1">
    <property type="nucleotide sequence ID" value="NM_181536.2"/>
</dbReference>
<dbReference type="SMR" id="Q7Z443"/>
<dbReference type="BioGRID" id="131173">
    <property type="interactions" value="4"/>
</dbReference>
<dbReference type="FunCoup" id="Q7Z443">
    <property type="interactions" value="83"/>
</dbReference>
<dbReference type="IntAct" id="Q7Z443">
    <property type="interactions" value="3"/>
</dbReference>
<dbReference type="MINT" id="Q7Z443"/>
<dbReference type="STRING" id="9606.ENSP00000480090"/>
<dbReference type="DrugBank" id="DB11093">
    <property type="generic name" value="Calcium citrate"/>
</dbReference>
<dbReference type="DrugBank" id="DB11348">
    <property type="generic name" value="Calcium Phosphate"/>
</dbReference>
<dbReference type="DrugBank" id="DB14481">
    <property type="generic name" value="Calcium phosphate dihydrate"/>
</dbReference>
<dbReference type="MEROPS" id="P02.039"/>
<dbReference type="TCDB" id="1.A.5.1.2">
    <property type="family name" value="the polycystin cation channel (pcc) family"/>
</dbReference>
<dbReference type="GlyCosmos" id="Q7Z443">
    <property type="glycosylation" value="5 sites, No reported glycans"/>
</dbReference>
<dbReference type="GlyGen" id="Q7Z443">
    <property type="glycosylation" value="8 sites, 1 O-linked glycan (3 sites)"/>
</dbReference>
<dbReference type="iPTMnet" id="Q7Z443"/>
<dbReference type="PhosphoSitePlus" id="Q7Z443"/>
<dbReference type="BioMuta" id="PKD1L3"/>
<dbReference type="DMDM" id="74713456"/>
<dbReference type="jPOST" id="Q7Z443"/>
<dbReference type="MassIVE" id="Q7Z443"/>
<dbReference type="PaxDb" id="9606-ENSP00000480090"/>
<dbReference type="PeptideAtlas" id="Q7Z443"/>
<dbReference type="ProteomicsDB" id="69147"/>
<dbReference type="Antibodypedia" id="72636">
    <property type="antibodies" value="43 antibodies from 6 providers"/>
</dbReference>
<dbReference type="DNASU" id="342372"/>
<dbReference type="Ensembl" id="ENST00000620267.2">
    <property type="protein sequence ID" value="ENSP00000480090.1"/>
    <property type="gene ID" value="ENSG00000277481.2"/>
</dbReference>
<dbReference type="GeneID" id="342372"/>
<dbReference type="KEGG" id="hsa:342372"/>
<dbReference type="MANE-Select" id="ENST00000620267.2">
    <property type="protein sequence ID" value="ENSP00000480090.1"/>
    <property type="RefSeq nucleotide sequence ID" value="NM_181536.2"/>
    <property type="RefSeq protein sequence ID" value="NP_853514.1"/>
</dbReference>
<dbReference type="UCSC" id="uc059wxm.1">
    <property type="organism name" value="human"/>
</dbReference>
<dbReference type="AGR" id="HGNC:21716"/>
<dbReference type="CTD" id="342372"/>
<dbReference type="DisGeNET" id="342372"/>
<dbReference type="GeneCards" id="PKD1L3"/>
<dbReference type="HGNC" id="HGNC:21716">
    <property type="gene designation" value="PKD1L3"/>
</dbReference>
<dbReference type="HPA" id="ENSG00000277481">
    <property type="expression patterns" value="Tissue enhanced (liver)"/>
</dbReference>
<dbReference type="MIM" id="607895">
    <property type="type" value="gene"/>
</dbReference>
<dbReference type="neXtProt" id="NX_Q7Z443"/>
<dbReference type="OpenTargets" id="ENSG00000277481"/>
<dbReference type="VEuPathDB" id="HostDB:ENSG00000277481"/>
<dbReference type="eggNOG" id="KOG3272">
    <property type="taxonomic scope" value="Eukaryota"/>
</dbReference>
<dbReference type="eggNOG" id="KOG3599">
    <property type="taxonomic scope" value="Eukaryota"/>
</dbReference>
<dbReference type="GeneTree" id="ENSGT00940000162813"/>
<dbReference type="HOGENOM" id="CLU_000913_1_0_1"/>
<dbReference type="InParanoid" id="Q7Z443"/>
<dbReference type="OMA" id="AVKRKWH"/>
<dbReference type="OrthoDB" id="2121937at2759"/>
<dbReference type="PAN-GO" id="Q7Z443">
    <property type="GO annotations" value="3 GO annotations based on evolutionary models"/>
</dbReference>
<dbReference type="PhylomeDB" id="Q7Z443"/>
<dbReference type="PathwayCommons" id="Q7Z443"/>
<dbReference type="SignaLink" id="Q7Z443"/>
<dbReference type="BioGRID-ORCS" id="342372">
    <property type="hits" value="6 hits in 255 CRISPR screens"/>
</dbReference>
<dbReference type="ChiTaRS" id="PKD1L3">
    <property type="organism name" value="human"/>
</dbReference>
<dbReference type="GenomeRNAi" id="342372"/>
<dbReference type="Pharos" id="Q7Z443">
    <property type="development level" value="Tbio"/>
</dbReference>
<dbReference type="PRO" id="PR:Q7Z443"/>
<dbReference type="Proteomes" id="UP000005640">
    <property type="component" value="Chromosome 16"/>
</dbReference>
<dbReference type="RNAct" id="Q7Z443">
    <property type="molecule type" value="protein"/>
</dbReference>
<dbReference type="Bgee" id="ENSG00000277481">
    <property type="expression patterns" value="Expressed in male germ line stem cell (sensu Vertebrata) in testis and 31 other cell types or tissues"/>
</dbReference>
<dbReference type="GO" id="GO:0034703">
    <property type="term" value="C:cation channel complex"/>
    <property type="evidence" value="ECO:0000250"/>
    <property type="project" value="BHF-UCL"/>
</dbReference>
<dbReference type="GO" id="GO:0070062">
    <property type="term" value="C:extracellular exosome"/>
    <property type="evidence" value="ECO:0007005"/>
    <property type="project" value="UniProtKB"/>
</dbReference>
<dbReference type="GO" id="GO:0016020">
    <property type="term" value="C:membrane"/>
    <property type="evidence" value="ECO:0000318"/>
    <property type="project" value="GO_Central"/>
</dbReference>
<dbReference type="GO" id="GO:0005886">
    <property type="term" value="C:plasma membrane"/>
    <property type="evidence" value="ECO:0000314"/>
    <property type="project" value="UniProtKB"/>
</dbReference>
<dbReference type="GO" id="GO:0043235">
    <property type="term" value="C:receptor complex"/>
    <property type="evidence" value="ECO:0000250"/>
    <property type="project" value="BHF-UCL"/>
</dbReference>
<dbReference type="GO" id="GO:0005262">
    <property type="term" value="F:calcium channel activity"/>
    <property type="evidence" value="ECO:0000318"/>
    <property type="project" value="GO_Central"/>
</dbReference>
<dbReference type="GO" id="GO:0005227">
    <property type="term" value="F:calcium-activated cation channel activity"/>
    <property type="evidence" value="ECO:0000250"/>
    <property type="project" value="UniProtKB"/>
</dbReference>
<dbReference type="GO" id="GO:0030246">
    <property type="term" value="F:carbohydrate binding"/>
    <property type="evidence" value="ECO:0007669"/>
    <property type="project" value="UniProtKB-KW"/>
</dbReference>
<dbReference type="GO" id="GO:0160128">
    <property type="term" value="F:pH-gated monoatomic ion channel activity"/>
    <property type="evidence" value="ECO:0000314"/>
    <property type="project" value="UniProtKB"/>
</dbReference>
<dbReference type="GO" id="GO:0070588">
    <property type="term" value="P:calcium ion transmembrane transport"/>
    <property type="evidence" value="ECO:0000314"/>
    <property type="project" value="UniProtKB"/>
</dbReference>
<dbReference type="GO" id="GO:0071468">
    <property type="term" value="P:cellular response to acidic pH"/>
    <property type="evidence" value="ECO:0000250"/>
    <property type="project" value="BHF-UCL"/>
</dbReference>
<dbReference type="GO" id="GO:0001581">
    <property type="term" value="P:detection of chemical stimulus involved in sensory perception of sour taste"/>
    <property type="evidence" value="ECO:0000250"/>
    <property type="project" value="BHF-UCL"/>
</dbReference>
<dbReference type="GO" id="GO:0050982">
    <property type="term" value="P:detection of mechanical stimulus"/>
    <property type="evidence" value="ECO:0000318"/>
    <property type="project" value="GO_Central"/>
</dbReference>
<dbReference type="GO" id="GO:0098655">
    <property type="term" value="P:monoatomic cation transmembrane transport"/>
    <property type="evidence" value="ECO:0000314"/>
    <property type="project" value="UniProtKB"/>
</dbReference>
<dbReference type="GO" id="GO:0006812">
    <property type="term" value="P:monoatomic cation transport"/>
    <property type="evidence" value="ECO:0000250"/>
    <property type="project" value="BHF-UCL"/>
</dbReference>
<dbReference type="GO" id="GO:0050915">
    <property type="term" value="P:sensory perception of sour taste"/>
    <property type="evidence" value="ECO:0000315"/>
    <property type="project" value="UniProtKB"/>
</dbReference>
<dbReference type="CDD" id="cd00037">
    <property type="entry name" value="CLECT"/>
    <property type="match status" value="1"/>
</dbReference>
<dbReference type="CDD" id="cd01752">
    <property type="entry name" value="PLAT_polycystin"/>
    <property type="match status" value="1"/>
</dbReference>
<dbReference type="FunFam" id="2.60.60.20:FF:000008">
    <property type="entry name" value="Polycystic kidney disease 1-like 2, isoform CRA_a"/>
    <property type="match status" value="1"/>
</dbReference>
<dbReference type="FunFam" id="1.10.287.70:FF:000086">
    <property type="entry name" value="Polycystic kidney disease 2"/>
    <property type="match status" value="1"/>
</dbReference>
<dbReference type="FunFam" id="2.60.220.50:FF:000030">
    <property type="entry name" value="Polycystin 1 like 3, transient receptor potential channel interacting"/>
    <property type="match status" value="1"/>
</dbReference>
<dbReference type="FunFam" id="3.10.100.10:FF:000092">
    <property type="entry name" value="Polycystin 1 like 3, transient receptor potential channel interacting"/>
    <property type="match status" value="1"/>
</dbReference>
<dbReference type="Gene3D" id="1.10.287.70">
    <property type="match status" value="1"/>
</dbReference>
<dbReference type="Gene3D" id="2.60.220.50">
    <property type="match status" value="1"/>
</dbReference>
<dbReference type="Gene3D" id="3.10.100.10">
    <property type="entry name" value="Mannose-Binding Protein A, subunit A"/>
    <property type="match status" value="1"/>
</dbReference>
<dbReference type="Gene3D" id="2.60.60.20">
    <property type="entry name" value="PLAT/LH2 domain"/>
    <property type="match status" value="1"/>
</dbReference>
<dbReference type="InterPro" id="IPR001304">
    <property type="entry name" value="C-type_lectin-like"/>
</dbReference>
<dbReference type="InterPro" id="IPR016186">
    <property type="entry name" value="C-type_lectin-like/link_sf"/>
</dbReference>
<dbReference type="InterPro" id="IPR016187">
    <property type="entry name" value="CTDL_fold"/>
</dbReference>
<dbReference type="InterPro" id="IPR057244">
    <property type="entry name" value="GAIN_B"/>
</dbReference>
<dbReference type="InterPro" id="IPR046338">
    <property type="entry name" value="GAIN_dom_sf"/>
</dbReference>
<dbReference type="InterPro" id="IPR000203">
    <property type="entry name" value="GPS"/>
</dbReference>
<dbReference type="InterPro" id="IPR000434">
    <property type="entry name" value="PC1"/>
</dbReference>
<dbReference type="InterPro" id="IPR013122">
    <property type="entry name" value="PKD1_2_channel"/>
</dbReference>
<dbReference type="InterPro" id="IPR001024">
    <property type="entry name" value="PLAT/LH2_dom"/>
</dbReference>
<dbReference type="InterPro" id="IPR036392">
    <property type="entry name" value="PLAT/LH2_dom_sf"/>
</dbReference>
<dbReference type="InterPro" id="IPR042060">
    <property type="entry name" value="PLAT_polycystin1"/>
</dbReference>
<dbReference type="InterPro" id="IPR051223">
    <property type="entry name" value="Polycystin"/>
</dbReference>
<dbReference type="PANTHER" id="PTHR10877">
    <property type="entry name" value="POLYCYSTIN FAMILY MEMBER"/>
    <property type="match status" value="1"/>
</dbReference>
<dbReference type="PANTHER" id="PTHR10877:SF136">
    <property type="entry name" value="POLYCYSTIN-1-LIKE PROTEIN 3"/>
    <property type="match status" value="1"/>
</dbReference>
<dbReference type="Pfam" id="PF01825">
    <property type="entry name" value="GPS"/>
    <property type="match status" value="1"/>
</dbReference>
<dbReference type="Pfam" id="PF00059">
    <property type="entry name" value="Lectin_C"/>
    <property type="match status" value="1"/>
</dbReference>
<dbReference type="Pfam" id="PF08016">
    <property type="entry name" value="PKD_channel"/>
    <property type="match status" value="1"/>
</dbReference>
<dbReference type="Pfam" id="PF01477">
    <property type="entry name" value="PLAT"/>
    <property type="match status" value="1"/>
</dbReference>
<dbReference type="PRINTS" id="PR00500">
    <property type="entry name" value="POLYCYSTIN1"/>
</dbReference>
<dbReference type="SMART" id="SM00303">
    <property type="entry name" value="GPS"/>
    <property type="match status" value="1"/>
</dbReference>
<dbReference type="SMART" id="SM00308">
    <property type="entry name" value="LH2"/>
    <property type="match status" value="1"/>
</dbReference>
<dbReference type="SUPFAM" id="SSF56436">
    <property type="entry name" value="C-type lectin-like"/>
    <property type="match status" value="1"/>
</dbReference>
<dbReference type="SUPFAM" id="SSF49723">
    <property type="entry name" value="Lipase/lipooxygenase domain (PLAT/LH2 domain)"/>
    <property type="match status" value="1"/>
</dbReference>
<dbReference type="PROSITE" id="PS50221">
    <property type="entry name" value="GAIN_B"/>
    <property type="match status" value="1"/>
</dbReference>
<dbReference type="PROSITE" id="PS50095">
    <property type="entry name" value="PLAT"/>
    <property type="match status" value="1"/>
</dbReference>
<organism>
    <name type="scientific">Homo sapiens</name>
    <name type="common">Human</name>
    <dbReference type="NCBI Taxonomy" id="9606"/>
    <lineage>
        <taxon>Eukaryota</taxon>
        <taxon>Metazoa</taxon>
        <taxon>Chordata</taxon>
        <taxon>Craniata</taxon>
        <taxon>Vertebrata</taxon>
        <taxon>Euteleostomi</taxon>
        <taxon>Mammalia</taxon>
        <taxon>Eutheria</taxon>
        <taxon>Euarchontoglires</taxon>
        <taxon>Primates</taxon>
        <taxon>Haplorrhini</taxon>
        <taxon>Catarrhini</taxon>
        <taxon>Hominidae</taxon>
        <taxon>Homo</taxon>
    </lineage>
</organism>